<comment type="function">
    <text>Probable member of the two-component regulatory system involved in the regulation of the hydrogenase activity. HoxA is probably phosphorylated by a sensory component (which could be HoxX) and then acts in conjunction with sigma-54 as a transcriptional activator.</text>
</comment>
<comment type="subcellular location">
    <subcellularLocation>
        <location evidence="4">Cytoplasm</location>
    </subcellularLocation>
</comment>
<reference key="1">
    <citation type="journal article" date="1991" name="J. Bacteriol.">
        <title>Three trans-acting regulatory functions control hydrogenase synthesis in Alcaligenes eutrophus.</title>
        <authorList>
            <person name="Eberz G."/>
            <person name="Friedrich B."/>
        </authorList>
    </citation>
    <scope>NUCLEOTIDE SEQUENCE [GENOMIC DNA]</scope>
</reference>
<reference key="2">
    <citation type="journal article" date="2003" name="J. Mol. Biol.">
        <title>Complete nucleotide sequence of pHG1: a Ralstonia eutropha H16 megaplasmid encoding key enzymes of H(2)-based lithoautotrophy and anaerobiosis.</title>
        <authorList>
            <person name="Schwartz E."/>
            <person name="Henne A."/>
            <person name="Cramm R."/>
            <person name="Eitinger T."/>
            <person name="Friedrich B."/>
            <person name="Gottschalk G."/>
        </authorList>
    </citation>
    <scope>NUCLEOTIDE SEQUENCE [LARGE SCALE GENOMIC DNA]</scope>
    <source>
        <strain>ATCC 17699 / DSM 428 / KCTC 22496 / NCIMB 10442 / H16 / Stanier 337</strain>
    </source>
</reference>
<dbReference type="EMBL" id="M64593">
    <property type="protein sequence ID" value="AAA21971.1"/>
    <property type="molecule type" value="Genomic_DNA"/>
</dbReference>
<dbReference type="EMBL" id="AY305378">
    <property type="protein sequence ID" value="AAP85775.1"/>
    <property type="molecule type" value="Genomic_DNA"/>
</dbReference>
<dbReference type="PIR" id="A38533">
    <property type="entry name" value="A38533"/>
</dbReference>
<dbReference type="RefSeq" id="WP_011153944.1">
    <property type="nucleotide sequence ID" value="NC_005241.1"/>
</dbReference>
<dbReference type="SMR" id="P29267"/>
<dbReference type="KEGG" id="reh:PHG019"/>
<dbReference type="PATRIC" id="fig|381666.6.peg.15"/>
<dbReference type="eggNOG" id="COG2204">
    <property type="taxonomic scope" value="Bacteria"/>
</dbReference>
<dbReference type="HOGENOM" id="CLU_000445_0_6_4"/>
<dbReference type="OrthoDB" id="9761705at2"/>
<dbReference type="Proteomes" id="UP000008210">
    <property type="component" value="Plasmid megaplasmid pHG1"/>
</dbReference>
<dbReference type="GO" id="GO:0005737">
    <property type="term" value="C:cytoplasm"/>
    <property type="evidence" value="ECO:0007669"/>
    <property type="project" value="UniProtKB-SubCell"/>
</dbReference>
<dbReference type="GO" id="GO:0005524">
    <property type="term" value="F:ATP binding"/>
    <property type="evidence" value="ECO:0007669"/>
    <property type="project" value="UniProtKB-KW"/>
</dbReference>
<dbReference type="GO" id="GO:0016887">
    <property type="term" value="F:ATP hydrolysis activity"/>
    <property type="evidence" value="ECO:0007669"/>
    <property type="project" value="InterPro"/>
</dbReference>
<dbReference type="GO" id="GO:0043565">
    <property type="term" value="F:sequence-specific DNA binding"/>
    <property type="evidence" value="ECO:0007669"/>
    <property type="project" value="InterPro"/>
</dbReference>
<dbReference type="GO" id="GO:0000160">
    <property type="term" value="P:phosphorelay signal transduction system"/>
    <property type="evidence" value="ECO:0007669"/>
    <property type="project" value="UniProtKB-KW"/>
</dbReference>
<dbReference type="GO" id="GO:0006355">
    <property type="term" value="P:regulation of DNA-templated transcription"/>
    <property type="evidence" value="ECO:0007669"/>
    <property type="project" value="InterPro"/>
</dbReference>
<dbReference type="CDD" id="cd00009">
    <property type="entry name" value="AAA"/>
    <property type="match status" value="1"/>
</dbReference>
<dbReference type="FunFam" id="3.40.50.300:FF:000006">
    <property type="entry name" value="DNA-binding transcriptional regulator NtrC"/>
    <property type="match status" value="1"/>
</dbReference>
<dbReference type="Gene3D" id="1.10.8.60">
    <property type="match status" value="1"/>
</dbReference>
<dbReference type="Gene3D" id="3.40.50.2300">
    <property type="match status" value="1"/>
</dbReference>
<dbReference type="Gene3D" id="1.10.10.60">
    <property type="entry name" value="Homeodomain-like"/>
    <property type="match status" value="1"/>
</dbReference>
<dbReference type="Gene3D" id="3.40.50.300">
    <property type="entry name" value="P-loop containing nucleotide triphosphate hydrolases"/>
    <property type="match status" value="1"/>
</dbReference>
<dbReference type="InterPro" id="IPR003593">
    <property type="entry name" value="AAA+_ATPase"/>
</dbReference>
<dbReference type="InterPro" id="IPR011006">
    <property type="entry name" value="CheY-like_superfamily"/>
</dbReference>
<dbReference type="InterPro" id="IPR009057">
    <property type="entry name" value="Homeodomain-like_sf"/>
</dbReference>
<dbReference type="InterPro" id="IPR002197">
    <property type="entry name" value="HTH_Fis"/>
</dbReference>
<dbReference type="InterPro" id="IPR027417">
    <property type="entry name" value="P-loop_NTPase"/>
</dbReference>
<dbReference type="InterPro" id="IPR001789">
    <property type="entry name" value="Sig_transdc_resp-reg_receiver"/>
</dbReference>
<dbReference type="InterPro" id="IPR002078">
    <property type="entry name" value="Sigma_54_int"/>
</dbReference>
<dbReference type="InterPro" id="IPR025662">
    <property type="entry name" value="Sigma_54_int_dom_ATP-bd_1"/>
</dbReference>
<dbReference type="InterPro" id="IPR025943">
    <property type="entry name" value="Sigma_54_int_dom_ATP-bd_2"/>
</dbReference>
<dbReference type="InterPro" id="IPR025944">
    <property type="entry name" value="Sigma_54_int_dom_CS"/>
</dbReference>
<dbReference type="PANTHER" id="PTHR32071:SF117">
    <property type="entry name" value="PTS-DEPENDENT DIHYDROXYACETONE KINASE OPERON REGULATORY PROTEIN-RELATED"/>
    <property type="match status" value="1"/>
</dbReference>
<dbReference type="PANTHER" id="PTHR32071">
    <property type="entry name" value="TRANSCRIPTIONAL REGULATORY PROTEIN"/>
    <property type="match status" value="1"/>
</dbReference>
<dbReference type="Pfam" id="PF02954">
    <property type="entry name" value="HTH_8"/>
    <property type="match status" value="1"/>
</dbReference>
<dbReference type="Pfam" id="PF00072">
    <property type="entry name" value="Response_reg"/>
    <property type="match status" value="1"/>
</dbReference>
<dbReference type="Pfam" id="PF00158">
    <property type="entry name" value="Sigma54_activat"/>
    <property type="match status" value="1"/>
</dbReference>
<dbReference type="PRINTS" id="PR01590">
    <property type="entry name" value="HTHFIS"/>
</dbReference>
<dbReference type="SMART" id="SM00382">
    <property type="entry name" value="AAA"/>
    <property type="match status" value="1"/>
</dbReference>
<dbReference type="SMART" id="SM00448">
    <property type="entry name" value="REC"/>
    <property type="match status" value="1"/>
</dbReference>
<dbReference type="SUPFAM" id="SSF52172">
    <property type="entry name" value="CheY-like"/>
    <property type="match status" value="1"/>
</dbReference>
<dbReference type="SUPFAM" id="SSF46689">
    <property type="entry name" value="Homeodomain-like"/>
    <property type="match status" value="1"/>
</dbReference>
<dbReference type="SUPFAM" id="SSF52540">
    <property type="entry name" value="P-loop containing nucleoside triphosphate hydrolases"/>
    <property type="match status" value="1"/>
</dbReference>
<dbReference type="PROSITE" id="PS50110">
    <property type="entry name" value="RESPONSE_REGULATORY"/>
    <property type="match status" value="1"/>
</dbReference>
<dbReference type="PROSITE" id="PS00675">
    <property type="entry name" value="SIGMA54_INTERACT_1"/>
    <property type="match status" value="1"/>
</dbReference>
<dbReference type="PROSITE" id="PS00676">
    <property type="entry name" value="SIGMA54_INTERACT_2"/>
    <property type="match status" value="1"/>
</dbReference>
<dbReference type="PROSITE" id="PS00688">
    <property type="entry name" value="SIGMA54_INTERACT_3"/>
    <property type="match status" value="1"/>
</dbReference>
<dbReference type="PROSITE" id="PS50045">
    <property type="entry name" value="SIGMA54_INTERACT_4"/>
    <property type="match status" value="1"/>
</dbReference>
<feature type="chain" id="PRO_0000081109" description="Hydrogenase transcriptional regulatory protein HoxA">
    <location>
        <begin position="1"/>
        <end position="482"/>
    </location>
</feature>
<feature type="domain" description="Response regulatory" evidence="2">
    <location>
        <begin position="7"/>
        <end position="121"/>
    </location>
</feature>
<feature type="domain" description="Sigma-54 factor interaction" evidence="3">
    <location>
        <begin position="167"/>
        <end position="394"/>
    </location>
</feature>
<feature type="DNA-binding region" description="H-T-H motif" evidence="1">
    <location>
        <begin position="456"/>
        <end position="475"/>
    </location>
</feature>
<feature type="binding site" evidence="3">
    <location>
        <begin position="193"/>
        <end position="200"/>
    </location>
    <ligand>
        <name>ATP</name>
        <dbReference type="ChEBI" id="CHEBI:30616"/>
    </ligand>
</feature>
<feature type="binding site" evidence="3">
    <location>
        <begin position="265"/>
        <end position="274"/>
    </location>
    <ligand>
        <name>ATP</name>
        <dbReference type="ChEBI" id="CHEBI:30616"/>
    </ligand>
</feature>
<feature type="modified residue" description="4-aspartylphosphate" evidence="2">
    <location>
        <position position="55"/>
    </location>
</feature>
<feature type="sequence conflict" description="In Ref. 1; AAA21971." evidence="4" ref="1">
    <original>V</original>
    <variation>G</variation>
    <location>
        <position position="468"/>
    </location>
</feature>
<name>HOXA_CUPNH</name>
<organism>
    <name type="scientific">Cupriavidus necator (strain ATCC 17699 / DSM 428 / KCTC 22496 / NCIMB 10442 / H16 / Stanier 337)</name>
    <name type="common">Ralstonia eutropha</name>
    <dbReference type="NCBI Taxonomy" id="381666"/>
    <lineage>
        <taxon>Bacteria</taxon>
        <taxon>Pseudomonadati</taxon>
        <taxon>Pseudomonadota</taxon>
        <taxon>Betaproteobacteria</taxon>
        <taxon>Burkholderiales</taxon>
        <taxon>Burkholderiaceae</taxon>
        <taxon>Cupriavidus</taxon>
    </lineage>
</organism>
<accession>P29267</accession>
<accession>Q7WXU1</accession>
<sequence>MSDKQATVLVVDDETRSQDALRRTLDEEFRVLTVSSADEARALLLRQPVSVILCDQRMPGLTGVEFLKEVRERWPEIVRIVISGYTDSEDIIAGVNEAGIYQYILKPWVPDHLIDTVRQAVEAQGLQGDMHRLDLELRTSTPVLRQRSSQKLASAQSAFNFERIVRAPGSPLDAVCEVAARVARYDLPVMVLGESGTGKELLARAIHYASPRAARAFVSENCAAVPDNLLESELFGHKRGAFTGAYEDHAGLFQRANGGTIFLDEIGDTSPAFQVKLLRVLQEGEVRPVGSPRWIPVDVRVIAATHCNLESDVHAGRFREDLYYRIAGVTISMPPLRERSGDLQPIAAKLLEQVAQELARPGLYFGGDALAAMMAYPWPGNIRELRNEIYRAVALSSGEEIRAQLFSRKVLHGQPGTVKRGPHVQTFPQSGTLQERLDAIEAVVLKEALLRHRWNKTHAAKELGLSRVGLRQKLLRFGLEEK</sequence>
<evidence type="ECO:0000250" key="1"/>
<evidence type="ECO:0000255" key="2">
    <source>
        <dbReference type="PROSITE-ProRule" id="PRU00169"/>
    </source>
</evidence>
<evidence type="ECO:0000255" key="3">
    <source>
        <dbReference type="PROSITE-ProRule" id="PRU00193"/>
    </source>
</evidence>
<evidence type="ECO:0000305" key="4"/>
<protein>
    <recommendedName>
        <fullName>Hydrogenase transcriptional regulatory protein HoxA</fullName>
    </recommendedName>
</protein>
<proteinExistence type="inferred from homology"/>
<geneLocation type="plasmid">
    <name>megaplasmid pHG1</name>
</geneLocation>
<gene>
    <name type="primary">hoxA</name>
    <name type="ordered locus">PHG019</name>
</gene>
<keyword id="KW-0010">Activator</keyword>
<keyword id="KW-0067">ATP-binding</keyword>
<keyword id="KW-0963">Cytoplasm</keyword>
<keyword id="KW-0238">DNA-binding</keyword>
<keyword id="KW-0547">Nucleotide-binding</keyword>
<keyword id="KW-0597">Phosphoprotein</keyword>
<keyword id="KW-0614">Plasmid</keyword>
<keyword id="KW-1185">Reference proteome</keyword>
<keyword id="KW-0804">Transcription</keyword>
<keyword id="KW-0805">Transcription regulation</keyword>
<keyword id="KW-0902">Two-component regulatory system</keyword>